<gene>
    <name evidence="1" type="primary">ycf3</name>
</gene>
<comment type="function">
    <text evidence="1">Essential for the assembly of the photosystem I (PSI) complex. May act as a chaperone-like factor to guide the assembly of the PSI subunits.</text>
</comment>
<comment type="subcellular location">
    <subcellularLocation>
        <location evidence="1">Plastid</location>
        <location evidence="1">Chloroplast thylakoid membrane</location>
        <topology evidence="1">Peripheral membrane protein</topology>
    </subcellularLocation>
</comment>
<comment type="similarity">
    <text evidence="1">Belongs to the Ycf3 family.</text>
</comment>
<dbReference type="EMBL" id="AF166114">
    <property type="protein sequence ID" value="AAF43814.1"/>
    <property type="molecule type" value="Genomic_DNA"/>
</dbReference>
<dbReference type="RefSeq" id="NP_038373.1">
    <property type="nucleotide sequence ID" value="NC_002186.1"/>
</dbReference>
<dbReference type="SMR" id="Q9MUT7"/>
<dbReference type="GeneID" id="800964"/>
<dbReference type="GO" id="GO:0009535">
    <property type="term" value="C:chloroplast thylakoid membrane"/>
    <property type="evidence" value="ECO:0007669"/>
    <property type="project" value="UniProtKB-SubCell"/>
</dbReference>
<dbReference type="GO" id="GO:0015979">
    <property type="term" value="P:photosynthesis"/>
    <property type="evidence" value="ECO:0007669"/>
    <property type="project" value="UniProtKB-UniRule"/>
</dbReference>
<dbReference type="Gene3D" id="1.25.40.10">
    <property type="entry name" value="Tetratricopeptide repeat domain"/>
    <property type="match status" value="1"/>
</dbReference>
<dbReference type="HAMAP" id="MF_00439">
    <property type="entry name" value="Ycf3"/>
    <property type="match status" value="1"/>
</dbReference>
<dbReference type="InterPro" id="IPR022818">
    <property type="entry name" value="PSI_Ycf3_assembly"/>
</dbReference>
<dbReference type="InterPro" id="IPR011990">
    <property type="entry name" value="TPR-like_helical_dom_sf"/>
</dbReference>
<dbReference type="InterPro" id="IPR019734">
    <property type="entry name" value="TPR_rpt"/>
</dbReference>
<dbReference type="NCBIfam" id="NF002725">
    <property type="entry name" value="PRK02603.1"/>
    <property type="match status" value="1"/>
</dbReference>
<dbReference type="Pfam" id="PF00515">
    <property type="entry name" value="TPR_1"/>
    <property type="match status" value="1"/>
</dbReference>
<dbReference type="SMART" id="SM00028">
    <property type="entry name" value="TPR"/>
    <property type="match status" value="3"/>
</dbReference>
<dbReference type="SUPFAM" id="SSF48452">
    <property type="entry name" value="TPR-like"/>
    <property type="match status" value="1"/>
</dbReference>
<dbReference type="PROSITE" id="PS50005">
    <property type="entry name" value="TPR"/>
    <property type="match status" value="3"/>
</dbReference>
<dbReference type="PROSITE" id="PS50293">
    <property type="entry name" value="TPR_REGION"/>
    <property type="match status" value="1"/>
</dbReference>
<organism>
    <name type="scientific">Mesostigma viride</name>
    <name type="common">Green alga</name>
    <dbReference type="NCBI Taxonomy" id="41882"/>
    <lineage>
        <taxon>Eukaryota</taxon>
        <taxon>Viridiplantae</taxon>
        <taxon>Streptophyta</taxon>
        <taxon>Mesostigmatophyceae</taxon>
        <taxon>Mesostigmatales</taxon>
        <taxon>Mesostigmataceae</taxon>
        <taxon>Mesostigma</taxon>
    </lineage>
</organism>
<accession>Q9MUT7</accession>
<evidence type="ECO:0000255" key="1">
    <source>
        <dbReference type="HAMAP-Rule" id="MF_00439"/>
    </source>
</evidence>
<geneLocation type="chloroplast"/>
<keyword id="KW-0150">Chloroplast</keyword>
<keyword id="KW-0472">Membrane</keyword>
<keyword id="KW-0602">Photosynthesis</keyword>
<keyword id="KW-0934">Plastid</keyword>
<keyword id="KW-0677">Repeat</keyword>
<keyword id="KW-0793">Thylakoid</keyword>
<keyword id="KW-0802">TPR repeat</keyword>
<name>YCF3_MESVI</name>
<proteinExistence type="inferred from homology"/>
<reference key="1">
    <citation type="journal article" date="2000" name="Nature">
        <title>Ancestral chloroplast genome in Mesostigma viride reveals an early branch of green plant evolution.</title>
        <authorList>
            <person name="Lemieux C."/>
            <person name="Otis C."/>
            <person name="Turmel M."/>
        </authorList>
    </citation>
    <scope>NUCLEOTIDE SEQUENCE [LARGE SCALE GENOMIC DNA]</scope>
    <source>
        <strain>NIES-296 / KY-14 / CCMP 2046</strain>
    </source>
</reference>
<feature type="chain" id="PRO_0000217809" description="Photosystem I assembly protein Ycf3">
    <location>
        <begin position="1"/>
        <end position="173"/>
    </location>
</feature>
<feature type="repeat" description="TPR 1">
    <location>
        <begin position="35"/>
        <end position="68"/>
    </location>
</feature>
<feature type="repeat" description="TPR 2">
    <location>
        <begin position="72"/>
        <end position="105"/>
    </location>
</feature>
<feature type="repeat" description="TPR 3">
    <location>
        <begin position="120"/>
        <end position="153"/>
    </location>
</feature>
<protein>
    <recommendedName>
        <fullName evidence="1">Photosystem I assembly protein Ycf3</fullName>
    </recommendedName>
</protein>
<sequence>MPRSQKNDNFIDKTFTVVADIILKVLPTTVREKAAFSYYRDGMSAQAEGEYAEALQNYYEAMRLEIDPYDRSYILYNIGLIHTSNGEHGKALEYYYQAIERNPSLPQALNNIAVIYHYRGEQAIEEGNIATSEILFNQAASYWKQAIRLAPNSYIEAQNWLKITGRIEDNINL</sequence>